<keyword id="KW-0285">Flavoprotein</keyword>
<keyword id="KW-0288">FMN</keyword>
<keyword id="KW-0520">NAD</keyword>
<keyword id="KW-0560">Oxidoreductase</keyword>
<comment type="function">
    <text evidence="1">Quinone reductase that provides resistance to thiol-specific stress caused by electrophilic quinones.</text>
</comment>
<comment type="function">
    <text evidence="1">Also exhibits azoreductase activity. Catalyzes the reductive cleavage of the azo bond in aromatic azo compounds to the corresponding amines.</text>
</comment>
<comment type="catalytic activity">
    <reaction evidence="1">
        <text>2 a quinone + NADH + H(+) = 2 a 1,4-benzosemiquinone + NAD(+)</text>
        <dbReference type="Rhea" id="RHEA:65952"/>
        <dbReference type="ChEBI" id="CHEBI:15378"/>
        <dbReference type="ChEBI" id="CHEBI:57540"/>
        <dbReference type="ChEBI" id="CHEBI:57945"/>
        <dbReference type="ChEBI" id="CHEBI:132124"/>
        <dbReference type="ChEBI" id="CHEBI:134225"/>
    </reaction>
</comment>
<comment type="catalytic activity">
    <reaction evidence="1">
        <text>N,N-dimethyl-1,4-phenylenediamine + anthranilate + 2 NAD(+) = 2-(4-dimethylaminophenyl)diazenylbenzoate + 2 NADH + 2 H(+)</text>
        <dbReference type="Rhea" id="RHEA:55872"/>
        <dbReference type="ChEBI" id="CHEBI:15378"/>
        <dbReference type="ChEBI" id="CHEBI:15783"/>
        <dbReference type="ChEBI" id="CHEBI:16567"/>
        <dbReference type="ChEBI" id="CHEBI:57540"/>
        <dbReference type="ChEBI" id="CHEBI:57945"/>
        <dbReference type="ChEBI" id="CHEBI:71579"/>
        <dbReference type="EC" id="1.7.1.17"/>
    </reaction>
</comment>
<comment type="cofactor">
    <cofactor evidence="1">
        <name>FMN</name>
        <dbReference type="ChEBI" id="CHEBI:58210"/>
    </cofactor>
    <text evidence="1">Binds 1 FMN per subunit.</text>
</comment>
<comment type="subunit">
    <text evidence="1">Homodimer.</text>
</comment>
<comment type="similarity">
    <text evidence="1">Belongs to the azoreductase type 1 family.</text>
</comment>
<dbReference type="EC" id="1.6.5.-" evidence="1"/>
<dbReference type="EC" id="1.7.1.17" evidence="1"/>
<dbReference type="EMBL" id="CP000644">
    <property type="protein sequence ID" value="ABO90244.1"/>
    <property type="molecule type" value="Genomic_DNA"/>
</dbReference>
<dbReference type="RefSeq" id="WP_005311244.1">
    <property type="nucleotide sequence ID" value="NC_009348.1"/>
</dbReference>
<dbReference type="SMR" id="A4SMX2"/>
<dbReference type="STRING" id="29491.GCA_000820065_00448"/>
<dbReference type="KEGG" id="asa:ASA_2179"/>
<dbReference type="eggNOG" id="COG1182">
    <property type="taxonomic scope" value="Bacteria"/>
</dbReference>
<dbReference type="HOGENOM" id="CLU_088964_0_0_6"/>
<dbReference type="Proteomes" id="UP000000225">
    <property type="component" value="Chromosome"/>
</dbReference>
<dbReference type="GO" id="GO:0009055">
    <property type="term" value="F:electron transfer activity"/>
    <property type="evidence" value="ECO:0007669"/>
    <property type="project" value="UniProtKB-UniRule"/>
</dbReference>
<dbReference type="GO" id="GO:0010181">
    <property type="term" value="F:FMN binding"/>
    <property type="evidence" value="ECO:0007669"/>
    <property type="project" value="UniProtKB-UniRule"/>
</dbReference>
<dbReference type="GO" id="GO:0016652">
    <property type="term" value="F:oxidoreductase activity, acting on NAD(P)H as acceptor"/>
    <property type="evidence" value="ECO:0007669"/>
    <property type="project" value="UniProtKB-UniRule"/>
</dbReference>
<dbReference type="GO" id="GO:0016655">
    <property type="term" value="F:oxidoreductase activity, acting on NAD(P)H, quinone or similar compound as acceptor"/>
    <property type="evidence" value="ECO:0007669"/>
    <property type="project" value="InterPro"/>
</dbReference>
<dbReference type="Gene3D" id="3.40.50.360">
    <property type="match status" value="1"/>
</dbReference>
<dbReference type="HAMAP" id="MF_01216">
    <property type="entry name" value="Azoreductase_type1"/>
    <property type="match status" value="1"/>
</dbReference>
<dbReference type="InterPro" id="IPR003680">
    <property type="entry name" value="Flavodoxin_fold"/>
</dbReference>
<dbReference type="InterPro" id="IPR029039">
    <property type="entry name" value="Flavoprotein-like_sf"/>
</dbReference>
<dbReference type="InterPro" id="IPR050104">
    <property type="entry name" value="FMN-dep_NADH:Q_OxRdtase_AzoR1"/>
</dbReference>
<dbReference type="InterPro" id="IPR023048">
    <property type="entry name" value="NADH:quinone_OxRdtase_FMN_depd"/>
</dbReference>
<dbReference type="PANTHER" id="PTHR43741">
    <property type="entry name" value="FMN-DEPENDENT NADH-AZOREDUCTASE 1"/>
    <property type="match status" value="1"/>
</dbReference>
<dbReference type="PANTHER" id="PTHR43741:SF2">
    <property type="entry name" value="FMN-DEPENDENT NADH:QUINONE OXIDOREDUCTASE"/>
    <property type="match status" value="1"/>
</dbReference>
<dbReference type="Pfam" id="PF02525">
    <property type="entry name" value="Flavodoxin_2"/>
    <property type="match status" value="1"/>
</dbReference>
<dbReference type="SUPFAM" id="SSF52218">
    <property type="entry name" value="Flavoproteins"/>
    <property type="match status" value="1"/>
</dbReference>
<protein>
    <recommendedName>
        <fullName evidence="1">FMN-dependent NADH:quinone oxidoreductase</fullName>
        <ecNumber evidence="1">1.6.5.-</ecNumber>
    </recommendedName>
    <alternativeName>
        <fullName evidence="1">Azo-dye reductase</fullName>
    </alternativeName>
    <alternativeName>
        <fullName evidence="1">FMN-dependent NADH-azo compound oxidoreductase</fullName>
    </alternativeName>
    <alternativeName>
        <fullName evidence="1">FMN-dependent NADH-azoreductase</fullName>
        <ecNumber evidence="1">1.7.1.17</ecNumber>
    </alternativeName>
</protein>
<reference key="1">
    <citation type="journal article" date="2008" name="BMC Genomics">
        <title>The genome of Aeromonas salmonicida subsp. salmonicida A449: insights into the evolution of a fish pathogen.</title>
        <authorList>
            <person name="Reith M.E."/>
            <person name="Singh R.K."/>
            <person name="Curtis B."/>
            <person name="Boyd J.M."/>
            <person name="Bouevitch A."/>
            <person name="Kimball J."/>
            <person name="Munholland J."/>
            <person name="Murphy C."/>
            <person name="Sarty D."/>
            <person name="Williams J."/>
            <person name="Nash J.H."/>
            <person name="Johnson S.C."/>
            <person name="Brown L.L."/>
        </authorList>
    </citation>
    <scope>NUCLEOTIDE SEQUENCE [LARGE SCALE GENOMIC DNA]</scope>
    <source>
        <strain>A449</strain>
    </source>
</reference>
<gene>
    <name evidence="1" type="primary">azoR</name>
    <name type="ordered locus">ASA_2179</name>
</gene>
<evidence type="ECO:0000255" key="1">
    <source>
        <dbReference type="HAMAP-Rule" id="MF_01216"/>
    </source>
</evidence>
<feature type="chain" id="PRO_1000066490" description="FMN-dependent NADH:quinone oxidoreductase">
    <location>
        <begin position="1"/>
        <end position="195"/>
    </location>
</feature>
<feature type="binding site" evidence="1">
    <location>
        <position position="10"/>
    </location>
    <ligand>
        <name>FMN</name>
        <dbReference type="ChEBI" id="CHEBI:58210"/>
    </ligand>
</feature>
<feature type="binding site" evidence="1">
    <location>
        <begin position="16"/>
        <end position="18"/>
    </location>
    <ligand>
        <name>FMN</name>
        <dbReference type="ChEBI" id="CHEBI:58210"/>
    </ligand>
</feature>
<feature type="binding site" evidence="1">
    <location>
        <begin position="91"/>
        <end position="94"/>
    </location>
    <ligand>
        <name>FMN</name>
        <dbReference type="ChEBI" id="CHEBI:58210"/>
    </ligand>
</feature>
<accession>A4SMX2</accession>
<sequence length="195" mass="20821">MANILVLKSSILGQYSQSNALIDGFLADHQSDTVTVRDLATLNLPVLDGELASGLRGGDNLNERQLAVMAQSDELIAELKGSDLVVIAAPMYNFSIPTQLKNWIDLIARAGVTFRYTETGPVGLVENTRALVISPRGGMHVGSATDLVTPYMRTVLGFIGIKDVDFIYAEGMGMGPDAQAKGIEQAKGQLETLAL</sequence>
<proteinExistence type="inferred from homology"/>
<name>AZOR_AERS4</name>
<organism>
    <name type="scientific">Aeromonas salmonicida (strain A449)</name>
    <dbReference type="NCBI Taxonomy" id="382245"/>
    <lineage>
        <taxon>Bacteria</taxon>
        <taxon>Pseudomonadati</taxon>
        <taxon>Pseudomonadota</taxon>
        <taxon>Gammaproteobacteria</taxon>
        <taxon>Aeromonadales</taxon>
        <taxon>Aeromonadaceae</taxon>
        <taxon>Aeromonas</taxon>
    </lineage>
</organism>